<organism>
    <name type="scientific">Brucella abortus (strain 2308)</name>
    <dbReference type="NCBI Taxonomy" id="359391"/>
    <lineage>
        <taxon>Bacteria</taxon>
        <taxon>Pseudomonadati</taxon>
        <taxon>Pseudomonadota</taxon>
        <taxon>Alphaproteobacteria</taxon>
        <taxon>Hyphomicrobiales</taxon>
        <taxon>Brucellaceae</taxon>
        <taxon>Brucella/Ochrobactrum group</taxon>
        <taxon>Brucella</taxon>
    </lineage>
</organism>
<feature type="chain" id="PRO_0000436620" description="Response regulator receiver protein CpdR">
    <location>
        <begin position="1"/>
        <end position="120"/>
    </location>
</feature>
<feature type="domain" description="Response regulatory" evidence="1">
    <location>
        <begin position="3"/>
        <end position="117"/>
    </location>
</feature>
<feature type="modified residue" description="4-aspartylphosphate" evidence="1 2">
    <location>
        <position position="52"/>
    </location>
</feature>
<feature type="mutagenesis site" description="90% reduction in phosphoryl transfer from CckA-P to CpdR via ChpT." evidence="2">
    <original>F</original>
    <variation>R</variation>
    <location>
        <position position="16"/>
    </location>
</feature>
<feature type="mutagenesis site" description="Cannot be phosphorylated. Leads to significant reduction in CtrA protein level. Forms large elongated cells with apparent budding at the midcell after 4 h of induction, and after 24 h of induction the cells are highly branched, which is consistent with a defect in proper cell division. Significant reduction in intracellular B.abortus replication and/or survival in human macrophages." evidence="2">
    <original>D</original>
    <variation>A</variation>
    <location>
        <position position="52"/>
    </location>
</feature>
<reference key="1">
    <citation type="journal article" date="2005" name="Infect. Immun.">
        <title>Whole-genome analyses of speciation events in pathogenic Brucellae.</title>
        <authorList>
            <person name="Chain P.S."/>
            <person name="Comerci D.J."/>
            <person name="Tolmasky M.E."/>
            <person name="Larimer F.W."/>
            <person name="Malfatti S.A."/>
            <person name="Vergez L.M."/>
            <person name="Aguero F."/>
            <person name="Land M.L."/>
            <person name="Ugalde R.A."/>
            <person name="Garcia E."/>
        </authorList>
    </citation>
    <scope>NUCLEOTIDE SEQUENCE [LARGE SCALE GENOMIC DNA]</scope>
    <source>
        <strain>2308</strain>
    </source>
</reference>
<reference key="2">
    <citation type="journal article" date="2015" name="Proc. Natl. Acad. Sci. U.S.A.">
        <title>Structural asymmetry in a conserved signaling system that regulates division, replication, and virulence of an intracellular pathogen.</title>
        <authorList>
            <person name="Willett J.W."/>
            <person name="Herrou J."/>
            <person name="Briegel A."/>
            <person name="Rotskoff G."/>
            <person name="Crosson S."/>
        </authorList>
    </citation>
    <scope>FUNCTION</scope>
    <scope>SUBCELLULAR LOCATION</scope>
    <scope>PHOSPHORYLATION AT ASP-52</scope>
    <scope>MUTAGENESIS OF PHE-16 AND ASP-52</scope>
    <scope>DISRUPTION PHENOTYPE</scope>
    <source>
        <strain>2308</strain>
    </source>
</reference>
<gene>
    <name evidence="3" type="primary">cpdR</name>
    <name evidence="5" type="ordered locus">BAB2_0042</name>
</gene>
<protein>
    <recommendedName>
        <fullName evidence="4">Response regulator receiver protein CpdR</fullName>
    </recommendedName>
    <alternativeName>
        <fullName evidence="3">Phospho-receiver protein CpdR</fullName>
    </alternativeName>
</protein>
<sequence length="120" mass="13586">MKRILLAEDDNDMRRFLVKALEKAGYHVTHFDNGASAYERLQEEPFSLLLTDIVMPEMDGIELARRATEIDPDLKIMFITGFAAVALNPDSDAPRDAKVLSKPFHLRDLVNEIEKMLIAA</sequence>
<proteinExistence type="evidence at protein level"/>
<keyword id="KW-0963">Cytoplasm</keyword>
<keyword id="KW-0597">Phosphoprotein</keyword>
<keyword id="KW-1185">Reference proteome</keyword>
<comment type="function">
    <text evidence="2">Component of a regulatory phosphorelay system that controls B.abortus cell growth, division, and intracellular survival inside mammalian host cells. This signaling pathway is composed of CckA, ChpT, CtrA and CpdR. CpdR is a response regulator substrate of ChpT. Unphosphorylated CpdR controls steady-state levels of CtrA in the B.abortus cell, likely via CtrA destabilization and activation of its proteolysis.</text>
</comment>
<comment type="subcellular location">
    <subcellularLocation>
        <location evidence="4">Cytoplasm</location>
    </subcellularLocation>
</comment>
<comment type="PTM">
    <text evidence="2">Is phosphorylated by ChpT-P on Asp-52.</text>
</comment>
<comment type="disruption phenotype">
    <text evidence="2">Deletion of cpdR does not result in a gross defect in cell morphology and has no effect on intracellular B.abortus replication and/or survival in human macrophages.</text>
</comment>
<dbReference type="EMBL" id="AM040265">
    <property type="protein sequence ID" value="CAJ12208.1"/>
    <property type="molecule type" value="Genomic_DNA"/>
</dbReference>
<dbReference type="RefSeq" id="WP_002966536.1">
    <property type="nucleotide sequence ID" value="NZ_KN046823.1"/>
</dbReference>
<dbReference type="SMR" id="Q2YIF7"/>
<dbReference type="STRING" id="359391.BAB2_0042"/>
<dbReference type="GeneID" id="97535733"/>
<dbReference type="KEGG" id="bmf:BAB2_0042"/>
<dbReference type="PATRIC" id="fig|359391.11.peg.1993"/>
<dbReference type="HOGENOM" id="CLU_000445_69_8_5"/>
<dbReference type="Proteomes" id="UP000002719">
    <property type="component" value="Chromosome II"/>
</dbReference>
<dbReference type="GO" id="GO:0005737">
    <property type="term" value="C:cytoplasm"/>
    <property type="evidence" value="ECO:0007669"/>
    <property type="project" value="UniProtKB-SubCell"/>
</dbReference>
<dbReference type="GO" id="GO:0000160">
    <property type="term" value="P:phosphorelay signal transduction system"/>
    <property type="evidence" value="ECO:0000314"/>
    <property type="project" value="UniProtKB"/>
</dbReference>
<dbReference type="GO" id="GO:0031647">
    <property type="term" value="P:regulation of protein stability"/>
    <property type="evidence" value="ECO:0000315"/>
    <property type="project" value="UniProtKB"/>
</dbReference>
<dbReference type="CDD" id="cd18160">
    <property type="entry name" value="REC_CpdR_CckA-like"/>
    <property type="match status" value="1"/>
</dbReference>
<dbReference type="FunFam" id="3.40.50.2300:FF:000083">
    <property type="entry name" value="Two-component response regulator"/>
    <property type="match status" value="1"/>
</dbReference>
<dbReference type="Gene3D" id="3.40.50.2300">
    <property type="match status" value="1"/>
</dbReference>
<dbReference type="InterPro" id="IPR050595">
    <property type="entry name" value="Bact_response_regulator"/>
</dbReference>
<dbReference type="InterPro" id="IPR011006">
    <property type="entry name" value="CheY-like_superfamily"/>
</dbReference>
<dbReference type="InterPro" id="IPR001789">
    <property type="entry name" value="Sig_transdc_resp-reg_receiver"/>
</dbReference>
<dbReference type="NCBIfam" id="NF046022">
    <property type="entry name" value="RespRegCpdRBruc"/>
    <property type="match status" value="1"/>
</dbReference>
<dbReference type="PANTHER" id="PTHR44591">
    <property type="entry name" value="STRESS RESPONSE REGULATOR PROTEIN 1"/>
    <property type="match status" value="1"/>
</dbReference>
<dbReference type="PANTHER" id="PTHR44591:SF21">
    <property type="entry name" value="TWO-COMPONENT RESPONSE REGULATOR"/>
    <property type="match status" value="1"/>
</dbReference>
<dbReference type="Pfam" id="PF00072">
    <property type="entry name" value="Response_reg"/>
    <property type="match status" value="1"/>
</dbReference>
<dbReference type="SMART" id="SM00448">
    <property type="entry name" value="REC"/>
    <property type="match status" value="1"/>
</dbReference>
<dbReference type="SUPFAM" id="SSF52172">
    <property type="entry name" value="CheY-like"/>
    <property type="match status" value="1"/>
</dbReference>
<dbReference type="PROSITE" id="PS50110">
    <property type="entry name" value="RESPONSE_REGULATORY"/>
    <property type="match status" value="1"/>
</dbReference>
<accession>Q2YIF7</accession>
<name>CPDR_BRUA2</name>
<evidence type="ECO:0000255" key="1">
    <source>
        <dbReference type="PROSITE-ProRule" id="PRU00169"/>
    </source>
</evidence>
<evidence type="ECO:0000269" key="2">
    <source>
    </source>
</evidence>
<evidence type="ECO:0000303" key="3">
    <source>
    </source>
</evidence>
<evidence type="ECO:0000305" key="4">
    <source>
    </source>
</evidence>
<evidence type="ECO:0000312" key="5">
    <source>
        <dbReference type="EMBL" id="CAJ12208.1"/>
    </source>
</evidence>